<reference key="1">
    <citation type="journal article" date="1997" name="DNA Res.">
        <title>Structural analysis of Arabidopsis thaliana chromosome 5. I. Sequence features of the 1.6 Mb regions covered by twenty physically assigned P1 clones.</title>
        <authorList>
            <person name="Sato S."/>
            <person name="Kotani H."/>
            <person name="Nakamura Y."/>
            <person name="Kaneko T."/>
            <person name="Asamizu E."/>
            <person name="Fukami M."/>
            <person name="Miyajima N."/>
            <person name="Tabata S."/>
        </authorList>
    </citation>
    <scope>NUCLEOTIDE SEQUENCE [LARGE SCALE GENOMIC DNA]</scope>
    <source>
        <strain>cv. Columbia</strain>
    </source>
</reference>
<reference key="2">
    <citation type="journal article" date="2000" name="Nature">
        <title>Sequence and analysis of chromosome 5 of the plant Arabidopsis thaliana.</title>
        <authorList>
            <person name="Tabata S."/>
            <person name="Kaneko T."/>
            <person name="Nakamura Y."/>
            <person name="Kotani H."/>
            <person name="Kato T."/>
            <person name="Asamizu E."/>
            <person name="Miyajima N."/>
            <person name="Sasamoto S."/>
            <person name="Kimura T."/>
            <person name="Hosouchi T."/>
            <person name="Kawashima K."/>
            <person name="Kohara M."/>
            <person name="Matsumoto M."/>
            <person name="Matsuno A."/>
            <person name="Muraki A."/>
            <person name="Nakayama S."/>
            <person name="Nakazaki N."/>
            <person name="Naruo K."/>
            <person name="Okumura S."/>
            <person name="Shinpo S."/>
            <person name="Takeuchi C."/>
            <person name="Wada T."/>
            <person name="Watanabe A."/>
            <person name="Yamada M."/>
            <person name="Yasuda M."/>
            <person name="Sato S."/>
            <person name="de la Bastide M."/>
            <person name="Huang E."/>
            <person name="Spiegel L."/>
            <person name="Gnoj L."/>
            <person name="O'Shaughnessy A."/>
            <person name="Preston R."/>
            <person name="Habermann K."/>
            <person name="Murray J."/>
            <person name="Johnson D."/>
            <person name="Rohlfing T."/>
            <person name="Nelson J."/>
            <person name="Stoneking T."/>
            <person name="Pepin K."/>
            <person name="Spieth J."/>
            <person name="Sekhon M."/>
            <person name="Armstrong J."/>
            <person name="Becker M."/>
            <person name="Belter E."/>
            <person name="Cordum H."/>
            <person name="Cordes M."/>
            <person name="Courtney L."/>
            <person name="Courtney W."/>
            <person name="Dante M."/>
            <person name="Du H."/>
            <person name="Edwards J."/>
            <person name="Fryman J."/>
            <person name="Haakensen B."/>
            <person name="Lamar E."/>
            <person name="Latreille P."/>
            <person name="Leonard S."/>
            <person name="Meyer R."/>
            <person name="Mulvaney E."/>
            <person name="Ozersky P."/>
            <person name="Riley A."/>
            <person name="Strowmatt C."/>
            <person name="Wagner-McPherson C."/>
            <person name="Wollam A."/>
            <person name="Yoakum M."/>
            <person name="Bell M."/>
            <person name="Dedhia N."/>
            <person name="Parnell L."/>
            <person name="Shah R."/>
            <person name="Rodriguez M."/>
            <person name="Hoon See L."/>
            <person name="Vil D."/>
            <person name="Baker J."/>
            <person name="Kirchoff K."/>
            <person name="Toth K."/>
            <person name="King L."/>
            <person name="Bahret A."/>
            <person name="Miller B."/>
            <person name="Marra M.A."/>
            <person name="Martienssen R."/>
            <person name="McCombie W.R."/>
            <person name="Wilson R.K."/>
            <person name="Murphy G."/>
            <person name="Bancroft I."/>
            <person name="Volckaert G."/>
            <person name="Wambutt R."/>
            <person name="Duesterhoeft A."/>
            <person name="Stiekema W."/>
            <person name="Pohl T."/>
            <person name="Entian K.-D."/>
            <person name="Terryn N."/>
            <person name="Hartley N."/>
            <person name="Bent E."/>
            <person name="Johnson S."/>
            <person name="Langham S.-A."/>
            <person name="McCullagh B."/>
            <person name="Robben J."/>
            <person name="Grymonprez B."/>
            <person name="Zimmermann W."/>
            <person name="Ramsperger U."/>
            <person name="Wedler H."/>
            <person name="Balke K."/>
            <person name="Wedler E."/>
            <person name="Peters S."/>
            <person name="van Staveren M."/>
            <person name="Dirkse W."/>
            <person name="Mooijman P."/>
            <person name="Klein Lankhorst R."/>
            <person name="Weitzenegger T."/>
            <person name="Bothe G."/>
            <person name="Rose M."/>
            <person name="Hauf J."/>
            <person name="Berneiser S."/>
            <person name="Hempel S."/>
            <person name="Feldpausch M."/>
            <person name="Lamberth S."/>
            <person name="Villarroel R."/>
            <person name="Gielen J."/>
            <person name="Ardiles W."/>
            <person name="Bents O."/>
            <person name="Lemcke K."/>
            <person name="Kolesov G."/>
            <person name="Mayer K.F.X."/>
            <person name="Rudd S."/>
            <person name="Schoof H."/>
            <person name="Schueller C."/>
            <person name="Zaccaria P."/>
            <person name="Mewes H.-W."/>
            <person name="Bevan M."/>
            <person name="Fransz P.F."/>
        </authorList>
    </citation>
    <scope>NUCLEOTIDE SEQUENCE [LARGE SCALE GENOMIC DNA]</scope>
    <source>
        <strain>cv. Columbia</strain>
    </source>
</reference>
<reference key="3">
    <citation type="journal article" date="2017" name="Plant J.">
        <title>Araport11: a complete reannotation of the Arabidopsis thaliana reference genome.</title>
        <authorList>
            <person name="Cheng C.Y."/>
            <person name="Krishnakumar V."/>
            <person name="Chan A.P."/>
            <person name="Thibaud-Nissen F."/>
            <person name="Schobel S."/>
            <person name="Town C.D."/>
        </authorList>
    </citation>
    <scope>GENOME REANNOTATION</scope>
    <source>
        <strain>cv. Columbia</strain>
    </source>
</reference>
<reference key="4">
    <citation type="submission" date="2002-03" db="EMBL/GenBank/DDBJ databases">
        <title>Full-length cDNA from Arabidopsis thaliana.</title>
        <authorList>
            <person name="Brover V.V."/>
            <person name="Troukhan M.E."/>
            <person name="Alexandrov N.A."/>
            <person name="Lu Y.-P."/>
            <person name="Flavell R.B."/>
            <person name="Feldmann K.A."/>
        </authorList>
    </citation>
    <scope>NUCLEOTIDE SEQUENCE [LARGE SCALE MRNA]</scope>
</reference>
<reference key="5">
    <citation type="journal article" date="2001" name="Cell Stress Chaperones">
        <title>The J-domain proteins of Arabidopsis thaliana: an unexpectedly large and diverse family of chaperones.</title>
        <authorList>
            <person name="Miernyk J.A."/>
        </authorList>
    </citation>
    <scope>GENE FAMILY</scope>
    <scope>NOMENCLATURE</scope>
</reference>
<reference key="6">
    <citation type="journal article" date="2003" name="Dev. Cell">
        <title>P58(IPK), a plant ortholog of double-stranded RNA-dependent protein kinase PKR inhibitor, functions in viral pathogenesis.</title>
        <authorList>
            <person name="Bilgin D.D."/>
            <person name="Liu Y."/>
            <person name="Schiff M."/>
            <person name="Dinesh-Kumar S.P."/>
        </authorList>
    </citation>
    <scope>FUNCTION</scope>
    <scope>INTERACTION WITH TOBAMOVIRUS TOBACCO ETCH VIRUS REPLICASES</scope>
    <scope>DISRUPTION PHENOTYPE</scope>
</reference>
<reference key="7">
    <citation type="journal article" date="2008" name="Plant Cell Physiol.">
        <title>Arabidopsis thaliana has a set of J proteins in the endoplasmic reticulum that are conserved from yeast to animals and plants.</title>
        <authorList>
            <person name="Yamamoto M."/>
            <person name="Maruyama D."/>
            <person name="Endo T."/>
            <person name="Nishikawa S."/>
        </authorList>
    </citation>
    <scope>SUBCELLULAR LOCATION</scope>
    <scope>TISSUE SPECIFICITY</scope>
    <scope>INDUCTION BY TUNICAMYCIN</scope>
    <scope>DISRUPTION PHENOTYPE</scope>
</reference>
<gene>
    <name type="primary">P58IPK</name>
    <name type="synonym">A36</name>
    <name type="ordered locus">At5g03160</name>
    <name type="ORF">F15A17.90</name>
    <name type="ORF">MOK16.7</name>
</gene>
<keyword id="KW-0256">Endoplasmic reticulum</keyword>
<keyword id="KW-0945">Host-virus interaction</keyword>
<keyword id="KW-1185">Reference proteome</keyword>
<keyword id="KW-0677">Repeat</keyword>
<keyword id="KW-0732">Signal</keyword>
<keyword id="KW-0802">TPR repeat</keyword>
<dbReference type="EMBL" id="AB005240">
    <property type="protein sequence ID" value="BAB08376.1"/>
    <property type="molecule type" value="Genomic_DNA"/>
</dbReference>
<dbReference type="EMBL" id="AL163002">
    <property type="protein sequence ID" value="CAB86083.1"/>
    <property type="molecule type" value="Genomic_DNA"/>
</dbReference>
<dbReference type="EMBL" id="CP002688">
    <property type="protein sequence ID" value="AED90562.1"/>
    <property type="molecule type" value="Genomic_DNA"/>
</dbReference>
<dbReference type="EMBL" id="AY085329">
    <property type="protein sequence ID" value="AAM62560.1"/>
    <property type="molecule type" value="mRNA"/>
</dbReference>
<dbReference type="PIR" id="T48337">
    <property type="entry name" value="T48337"/>
</dbReference>
<dbReference type="RefSeq" id="NP_195936.1">
    <property type="nucleotide sequence ID" value="NM_120394.4"/>
</dbReference>
<dbReference type="SMR" id="Q9LYW9"/>
<dbReference type="FunCoup" id="Q9LYW9">
    <property type="interactions" value="4442"/>
</dbReference>
<dbReference type="STRING" id="3702.Q9LYW9"/>
<dbReference type="iPTMnet" id="Q9LYW9"/>
<dbReference type="PaxDb" id="3702-AT5G03160.1"/>
<dbReference type="ProteomicsDB" id="222086"/>
<dbReference type="EnsemblPlants" id="AT5G03160.1">
    <property type="protein sequence ID" value="AT5G03160.1"/>
    <property type="gene ID" value="AT5G03160"/>
</dbReference>
<dbReference type="GeneID" id="831917"/>
<dbReference type="Gramene" id="AT5G03160.1">
    <property type="protein sequence ID" value="AT5G03160.1"/>
    <property type="gene ID" value="AT5G03160"/>
</dbReference>
<dbReference type="KEGG" id="ath:AT5G03160"/>
<dbReference type="Araport" id="AT5G03160"/>
<dbReference type="TAIR" id="AT5G03160">
    <property type="gene designation" value="P58IPK"/>
</dbReference>
<dbReference type="eggNOG" id="KOG0550">
    <property type="taxonomic scope" value="Eukaryota"/>
</dbReference>
<dbReference type="HOGENOM" id="CLU_015935_3_1_1"/>
<dbReference type="InParanoid" id="Q9LYW9"/>
<dbReference type="OMA" id="PFAHFQH"/>
<dbReference type="OrthoDB" id="10250354at2759"/>
<dbReference type="PhylomeDB" id="Q9LYW9"/>
<dbReference type="PRO" id="PR:Q9LYW9"/>
<dbReference type="Proteomes" id="UP000006548">
    <property type="component" value="Chromosome 5"/>
</dbReference>
<dbReference type="ExpressionAtlas" id="Q9LYW9">
    <property type="expression patterns" value="baseline and differential"/>
</dbReference>
<dbReference type="GO" id="GO:0005783">
    <property type="term" value="C:endoplasmic reticulum"/>
    <property type="evidence" value="ECO:0007005"/>
    <property type="project" value="TAIR"/>
</dbReference>
<dbReference type="GO" id="GO:0005788">
    <property type="term" value="C:endoplasmic reticulum lumen"/>
    <property type="evidence" value="ECO:0000314"/>
    <property type="project" value="TAIR"/>
</dbReference>
<dbReference type="GO" id="GO:0044794">
    <property type="term" value="P:positive regulation by host of viral process"/>
    <property type="evidence" value="ECO:0000314"/>
    <property type="project" value="UniProtKB"/>
</dbReference>
<dbReference type="CDD" id="cd06257">
    <property type="entry name" value="DnaJ"/>
    <property type="match status" value="1"/>
</dbReference>
<dbReference type="FunFam" id="1.25.40.10:FF:000258">
    <property type="entry name" value="DnaJ domain containing protein"/>
    <property type="match status" value="1"/>
</dbReference>
<dbReference type="FunFam" id="1.10.287.110:FF:000055">
    <property type="entry name" value="DnaJ subfamily C member 7"/>
    <property type="match status" value="1"/>
</dbReference>
<dbReference type="Gene3D" id="1.10.287.110">
    <property type="entry name" value="DnaJ domain"/>
    <property type="match status" value="1"/>
</dbReference>
<dbReference type="Gene3D" id="1.25.40.10">
    <property type="entry name" value="Tetratricopeptide repeat domain"/>
    <property type="match status" value="1"/>
</dbReference>
<dbReference type="InterPro" id="IPR001623">
    <property type="entry name" value="DnaJ_domain"/>
</dbReference>
<dbReference type="InterPro" id="IPR018253">
    <property type="entry name" value="DnaJ_domain_CS"/>
</dbReference>
<dbReference type="InterPro" id="IPR036869">
    <property type="entry name" value="J_dom_sf"/>
</dbReference>
<dbReference type="InterPro" id="IPR011990">
    <property type="entry name" value="TPR-like_helical_dom_sf"/>
</dbReference>
<dbReference type="InterPro" id="IPR019734">
    <property type="entry name" value="TPR_rpt"/>
</dbReference>
<dbReference type="PANTHER" id="PTHR45188:SF2">
    <property type="entry name" value="DNAJ HOMOLOG SUBFAMILY C MEMBER 7"/>
    <property type="match status" value="1"/>
</dbReference>
<dbReference type="PANTHER" id="PTHR45188">
    <property type="entry name" value="DNAJ PROTEIN P58IPK HOMOLOG"/>
    <property type="match status" value="1"/>
</dbReference>
<dbReference type="Pfam" id="PF00226">
    <property type="entry name" value="DnaJ"/>
    <property type="match status" value="1"/>
</dbReference>
<dbReference type="Pfam" id="PF13432">
    <property type="entry name" value="TPR_16"/>
    <property type="match status" value="1"/>
</dbReference>
<dbReference type="Pfam" id="PF13181">
    <property type="entry name" value="TPR_8"/>
    <property type="match status" value="1"/>
</dbReference>
<dbReference type="PRINTS" id="PR00625">
    <property type="entry name" value="JDOMAIN"/>
</dbReference>
<dbReference type="SMART" id="SM00271">
    <property type="entry name" value="DnaJ"/>
    <property type="match status" value="1"/>
</dbReference>
<dbReference type="SMART" id="SM00028">
    <property type="entry name" value="TPR"/>
    <property type="match status" value="5"/>
</dbReference>
<dbReference type="SUPFAM" id="SSF46565">
    <property type="entry name" value="Chaperone J-domain"/>
    <property type="match status" value="1"/>
</dbReference>
<dbReference type="SUPFAM" id="SSF48452">
    <property type="entry name" value="TPR-like"/>
    <property type="match status" value="1"/>
</dbReference>
<dbReference type="PROSITE" id="PS00636">
    <property type="entry name" value="DNAJ_1"/>
    <property type="match status" value="1"/>
</dbReference>
<dbReference type="PROSITE" id="PS50076">
    <property type="entry name" value="DNAJ_2"/>
    <property type="match status" value="1"/>
</dbReference>
<dbReference type="PROSITE" id="PS50005">
    <property type="entry name" value="TPR"/>
    <property type="match status" value="5"/>
</dbReference>
<dbReference type="PROSITE" id="PS50293">
    <property type="entry name" value="TPR_REGION"/>
    <property type="match status" value="1"/>
</dbReference>
<organism>
    <name type="scientific">Arabidopsis thaliana</name>
    <name type="common">Mouse-ear cress</name>
    <dbReference type="NCBI Taxonomy" id="3702"/>
    <lineage>
        <taxon>Eukaryota</taxon>
        <taxon>Viridiplantae</taxon>
        <taxon>Streptophyta</taxon>
        <taxon>Embryophyta</taxon>
        <taxon>Tracheophyta</taxon>
        <taxon>Spermatophyta</taxon>
        <taxon>Magnoliopsida</taxon>
        <taxon>eudicotyledons</taxon>
        <taxon>Gunneridae</taxon>
        <taxon>Pentapetalae</taxon>
        <taxon>rosids</taxon>
        <taxon>malvids</taxon>
        <taxon>Brassicales</taxon>
        <taxon>Brassicaceae</taxon>
        <taxon>Camelineae</taxon>
        <taxon>Arabidopsis</taxon>
    </lineage>
</organism>
<proteinExistence type="evidence at protein level"/>
<name>DNJ36_ARATH</name>
<feature type="signal peptide" evidence="1">
    <location>
        <begin position="1"/>
        <end position="42"/>
    </location>
</feature>
<feature type="chain" id="PRO_0000430366" description="DnaJ protein P58IPK homolog">
    <location>
        <begin position="43"/>
        <end position="482"/>
    </location>
</feature>
<feature type="repeat" description="TPR 1">
    <location>
        <begin position="50"/>
        <end position="83"/>
    </location>
</feature>
<feature type="repeat" description="TPR 2">
    <location>
        <begin position="85"/>
        <end position="117"/>
    </location>
</feature>
<feature type="repeat" description="TPR 3">
    <location>
        <begin position="130"/>
        <end position="164"/>
    </location>
</feature>
<feature type="repeat" description="TPR 4">
    <location>
        <begin position="166"/>
        <end position="198"/>
    </location>
</feature>
<feature type="repeat" description="TPR 5">
    <location>
        <begin position="199"/>
        <end position="232"/>
    </location>
</feature>
<feature type="repeat" description="TPR 6">
    <location>
        <begin position="245"/>
        <end position="278"/>
    </location>
</feature>
<feature type="repeat" description="TPR 7">
    <location>
        <begin position="283"/>
        <end position="316"/>
    </location>
</feature>
<feature type="repeat" description="TPR 8">
    <location>
        <begin position="318"/>
        <end position="350"/>
    </location>
</feature>
<feature type="domain" description="J" evidence="2">
    <location>
        <begin position="370"/>
        <end position="436"/>
    </location>
</feature>
<comment type="function">
    <text evidence="3">Plays an important positive role in viral symptom development and is required for viral multiplication and pathogenesis.</text>
</comment>
<comment type="subunit">
    <text evidence="3">Interacts with the helicase domain of the tobamovirus (TMV) and the tobacco etch virus (TEV) replicases.</text>
</comment>
<comment type="subcellular location">
    <subcellularLocation>
        <location evidence="5">Endoplasmic reticulum lumen</location>
    </subcellularLocation>
</comment>
<comment type="tissue specificity">
    <text evidence="4">Expressed in flower buds and flowers.</text>
</comment>
<comment type="induction">
    <text evidence="4">By tunicamycin.</text>
</comment>
<comment type="disruption phenotype">
    <text evidence="3 4">No visible phenotype under normal growth conditions, but the mutant plants die rapidly after challenges with the turnip mosaic virus (TuMV) and turnip vein clearing virus (TVCV). The double mutant erdj3b and p58ipk is male gametophytic lethal.</text>
</comment>
<accession>Q9LYW9</accession>
<sequence length="482" mass="53690">MDLFRVWSGMDFLAWRGMAYTLLLLNFVFACQLLLLQPLVSALDGQSVDAAELFERASQSIKVKRYSDALDDLNAAIEADPALSEAYFKRASVLRHFCRYEDSENSYQKYLEFKSGDSNAEKELSQLHQAKSALETASTLYESKDIAKALEFVDKVVLVFSPACSKAKLLKVKLLMVSKDYSGAISETGYILKEDENNLEALLLRGRAYYYLADHDIAQRHYQKGLRLDPEHSELKKAYFGLKKLLKKTKSAEDNANKGKLRVSAEEYKEAIALDPEHTANNVHLYLGLCKVSVRLGRGKDGLNSCNEALNIDAELIEALHQRGEAKLLLEDWEGAVEDLKQAAQNSQDMEIHESLGKAEKALKMSKRKDWYKILGISRTASISEIKKAYKKLALQWHPDKNVGNREEAENKFREIAAAYEILGDDDKRARFDRGEDLEDMGGGGGGGYNPFHGGGGGGQQYTFHFEGGFPGGGGGFGGFGF</sequence>
<protein>
    <recommendedName>
        <fullName>DnaJ protein P58IPK homolog</fullName>
        <shortName>AtP58IPK</shortName>
    </recommendedName>
    <alternativeName>
        <fullName>Chaperone protein dnaJ 36</fullName>
        <shortName>AtDjA36</shortName>
        <shortName>AtJ36</shortName>
    </alternativeName>
</protein>
<evidence type="ECO:0000255" key="1"/>
<evidence type="ECO:0000255" key="2">
    <source>
        <dbReference type="PROSITE-ProRule" id="PRU00286"/>
    </source>
</evidence>
<evidence type="ECO:0000269" key="3">
    <source>
    </source>
</evidence>
<evidence type="ECO:0000269" key="4">
    <source>
    </source>
</evidence>
<evidence type="ECO:0000305" key="5">
    <source>
    </source>
</evidence>